<accession>Q2NJ15</accession>
<feature type="chain" id="PRO_0000237297" description="DNA-directed RNA polymerase subunit beta">
    <location>
        <begin position="1"/>
        <end position="1273"/>
    </location>
</feature>
<gene>
    <name evidence="1" type="primary">rpoB</name>
    <name type="ordered locus">AYWB_461</name>
</gene>
<reference key="1">
    <citation type="journal article" date="2006" name="J. Bacteriol.">
        <title>Living with genome instability: the adaptation of phytoplasmas to diverse environments of their insect and plant hosts.</title>
        <authorList>
            <person name="Bai X."/>
            <person name="Zhang J."/>
            <person name="Ewing A."/>
            <person name="Miller S.A."/>
            <person name="Jancso Radek A."/>
            <person name="Shevchenko D.V."/>
            <person name="Tsukerman K."/>
            <person name="Walunas T."/>
            <person name="Lapidus A."/>
            <person name="Campbell J.W."/>
            <person name="Hogenhout S.A."/>
        </authorList>
    </citation>
    <scope>NUCLEOTIDE SEQUENCE [LARGE SCALE GENOMIC DNA]</scope>
    <source>
        <strain>AYWB</strain>
    </source>
</reference>
<proteinExistence type="inferred from homology"/>
<dbReference type="EC" id="2.7.7.6" evidence="1"/>
<dbReference type="EMBL" id="CP000061">
    <property type="protein sequence ID" value="ABC65578.1"/>
    <property type="molecule type" value="Genomic_DNA"/>
</dbReference>
<dbReference type="RefSeq" id="WP_011412742.1">
    <property type="nucleotide sequence ID" value="NC_007716.1"/>
</dbReference>
<dbReference type="SMR" id="Q2NJ15"/>
<dbReference type="STRING" id="322098.AYWB_461"/>
<dbReference type="KEGG" id="ayw:AYWB_461"/>
<dbReference type="eggNOG" id="COG0085">
    <property type="taxonomic scope" value="Bacteria"/>
</dbReference>
<dbReference type="HOGENOM" id="CLU_000524_4_1_14"/>
<dbReference type="OrthoDB" id="9803954at2"/>
<dbReference type="PhylomeDB" id="Q2NJ15"/>
<dbReference type="BRENDA" id="2.7.7.6">
    <property type="organism ID" value="14809"/>
</dbReference>
<dbReference type="Proteomes" id="UP000001934">
    <property type="component" value="Chromosome"/>
</dbReference>
<dbReference type="GO" id="GO:0000428">
    <property type="term" value="C:DNA-directed RNA polymerase complex"/>
    <property type="evidence" value="ECO:0007669"/>
    <property type="project" value="UniProtKB-KW"/>
</dbReference>
<dbReference type="GO" id="GO:0003677">
    <property type="term" value="F:DNA binding"/>
    <property type="evidence" value="ECO:0007669"/>
    <property type="project" value="UniProtKB-UniRule"/>
</dbReference>
<dbReference type="GO" id="GO:0003899">
    <property type="term" value="F:DNA-directed RNA polymerase activity"/>
    <property type="evidence" value="ECO:0007669"/>
    <property type="project" value="UniProtKB-UniRule"/>
</dbReference>
<dbReference type="GO" id="GO:0032549">
    <property type="term" value="F:ribonucleoside binding"/>
    <property type="evidence" value="ECO:0007669"/>
    <property type="project" value="InterPro"/>
</dbReference>
<dbReference type="GO" id="GO:0006351">
    <property type="term" value="P:DNA-templated transcription"/>
    <property type="evidence" value="ECO:0007669"/>
    <property type="project" value="UniProtKB-UniRule"/>
</dbReference>
<dbReference type="CDD" id="cd00653">
    <property type="entry name" value="RNA_pol_B_RPB2"/>
    <property type="match status" value="1"/>
</dbReference>
<dbReference type="Gene3D" id="2.40.50.100">
    <property type="match status" value="1"/>
</dbReference>
<dbReference type="Gene3D" id="2.40.50.150">
    <property type="match status" value="1"/>
</dbReference>
<dbReference type="Gene3D" id="3.90.1100.10">
    <property type="match status" value="2"/>
</dbReference>
<dbReference type="Gene3D" id="2.30.150.10">
    <property type="entry name" value="DNA-directed RNA polymerase, beta subunit, external 1 domain"/>
    <property type="match status" value="1"/>
</dbReference>
<dbReference type="Gene3D" id="2.40.270.10">
    <property type="entry name" value="DNA-directed RNA polymerase, subunit 2, domain 6"/>
    <property type="match status" value="2"/>
</dbReference>
<dbReference type="Gene3D" id="3.90.1800.10">
    <property type="entry name" value="RNA polymerase alpha subunit dimerisation domain"/>
    <property type="match status" value="1"/>
</dbReference>
<dbReference type="Gene3D" id="3.90.1110.10">
    <property type="entry name" value="RNA polymerase Rpb2, domain 2"/>
    <property type="match status" value="2"/>
</dbReference>
<dbReference type="HAMAP" id="MF_01321">
    <property type="entry name" value="RNApol_bact_RpoB"/>
    <property type="match status" value="1"/>
</dbReference>
<dbReference type="InterPro" id="IPR042107">
    <property type="entry name" value="DNA-dir_RNA_pol_bsu_ext_1_sf"/>
</dbReference>
<dbReference type="InterPro" id="IPR019462">
    <property type="entry name" value="DNA-dir_RNA_pol_bsu_external_1"/>
</dbReference>
<dbReference type="InterPro" id="IPR015712">
    <property type="entry name" value="DNA-dir_RNA_pol_su2"/>
</dbReference>
<dbReference type="InterPro" id="IPR007120">
    <property type="entry name" value="DNA-dir_RNAP_su2_dom"/>
</dbReference>
<dbReference type="InterPro" id="IPR037033">
    <property type="entry name" value="DNA-dir_RNAP_su2_hyb_sf"/>
</dbReference>
<dbReference type="InterPro" id="IPR010243">
    <property type="entry name" value="RNA_pol_bsu_bac"/>
</dbReference>
<dbReference type="InterPro" id="IPR007121">
    <property type="entry name" value="RNA_pol_bsu_CS"/>
</dbReference>
<dbReference type="InterPro" id="IPR007644">
    <property type="entry name" value="RNA_pol_bsu_protrusion"/>
</dbReference>
<dbReference type="InterPro" id="IPR007642">
    <property type="entry name" value="RNA_pol_Rpb2_2"/>
</dbReference>
<dbReference type="InterPro" id="IPR037034">
    <property type="entry name" value="RNA_pol_Rpb2_2_sf"/>
</dbReference>
<dbReference type="InterPro" id="IPR007645">
    <property type="entry name" value="RNA_pol_Rpb2_3"/>
</dbReference>
<dbReference type="InterPro" id="IPR007641">
    <property type="entry name" value="RNA_pol_Rpb2_7"/>
</dbReference>
<dbReference type="InterPro" id="IPR014724">
    <property type="entry name" value="RNA_pol_RPB2_OB-fold"/>
</dbReference>
<dbReference type="NCBIfam" id="NF001616">
    <property type="entry name" value="PRK00405.1"/>
    <property type="match status" value="1"/>
</dbReference>
<dbReference type="NCBIfam" id="TIGR02013">
    <property type="entry name" value="rpoB"/>
    <property type="match status" value="1"/>
</dbReference>
<dbReference type="PANTHER" id="PTHR20856">
    <property type="entry name" value="DNA-DIRECTED RNA POLYMERASE I SUBUNIT 2"/>
    <property type="match status" value="1"/>
</dbReference>
<dbReference type="Pfam" id="PF04563">
    <property type="entry name" value="RNA_pol_Rpb2_1"/>
    <property type="match status" value="1"/>
</dbReference>
<dbReference type="Pfam" id="PF04561">
    <property type="entry name" value="RNA_pol_Rpb2_2"/>
    <property type="match status" value="2"/>
</dbReference>
<dbReference type="Pfam" id="PF04565">
    <property type="entry name" value="RNA_pol_Rpb2_3"/>
    <property type="match status" value="1"/>
</dbReference>
<dbReference type="Pfam" id="PF10385">
    <property type="entry name" value="RNA_pol_Rpb2_45"/>
    <property type="match status" value="1"/>
</dbReference>
<dbReference type="Pfam" id="PF00562">
    <property type="entry name" value="RNA_pol_Rpb2_6"/>
    <property type="match status" value="1"/>
</dbReference>
<dbReference type="Pfam" id="PF04560">
    <property type="entry name" value="RNA_pol_Rpb2_7"/>
    <property type="match status" value="1"/>
</dbReference>
<dbReference type="SUPFAM" id="SSF64484">
    <property type="entry name" value="beta and beta-prime subunits of DNA dependent RNA-polymerase"/>
    <property type="match status" value="1"/>
</dbReference>
<dbReference type="PROSITE" id="PS01166">
    <property type="entry name" value="RNA_POL_BETA"/>
    <property type="match status" value="1"/>
</dbReference>
<protein>
    <recommendedName>
        <fullName evidence="1">DNA-directed RNA polymerase subunit beta</fullName>
        <shortName evidence="1">RNAP subunit beta</shortName>
        <ecNumber evidence="1">2.7.7.6</ecNumber>
    </recommendedName>
    <alternativeName>
        <fullName evidence="1">RNA polymerase subunit beta</fullName>
    </alternativeName>
    <alternativeName>
        <fullName evidence="1">Transcriptase subunit beta</fullName>
    </alternativeName>
</protein>
<evidence type="ECO:0000255" key="1">
    <source>
        <dbReference type="HAMAP-Rule" id="MF_01321"/>
    </source>
</evidence>
<organism>
    <name type="scientific">Aster yellows witches'-broom phytoplasma (strain AYWB)</name>
    <dbReference type="NCBI Taxonomy" id="322098"/>
    <lineage>
        <taxon>Bacteria</taxon>
        <taxon>Bacillati</taxon>
        <taxon>Mycoplasmatota</taxon>
        <taxon>Mollicutes</taxon>
        <taxon>Acholeplasmatales</taxon>
        <taxon>Acholeplasmataceae</taxon>
        <taxon>Candidatus Phytoplasma</taxon>
        <taxon>16SrI (Aster yellows group)</taxon>
    </lineage>
</organism>
<keyword id="KW-0240">DNA-directed RNA polymerase</keyword>
<keyword id="KW-0548">Nucleotidyltransferase</keyword>
<keyword id="KW-0804">Transcription</keyword>
<keyword id="KW-0808">Transferase</keyword>
<name>RPOB_AYWBP</name>
<comment type="function">
    <text evidence="1">DNA-dependent RNA polymerase catalyzes the transcription of DNA into RNA using the four ribonucleoside triphosphates as substrates.</text>
</comment>
<comment type="catalytic activity">
    <reaction evidence="1">
        <text>RNA(n) + a ribonucleoside 5'-triphosphate = RNA(n+1) + diphosphate</text>
        <dbReference type="Rhea" id="RHEA:21248"/>
        <dbReference type="Rhea" id="RHEA-COMP:14527"/>
        <dbReference type="Rhea" id="RHEA-COMP:17342"/>
        <dbReference type="ChEBI" id="CHEBI:33019"/>
        <dbReference type="ChEBI" id="CHEBI:61557"/>
        <dbReference type="ChEBI" id="CHEBI:140395"/>
        <dbReference type="EC" id="2.7.7.6"/>
    </reaction>
</comment>
<comment type="subunit">
    <text evidence="1">The RNAP catalytic core consists of 2 alpha, 1 beta, 1 beta' and 1 omega subunit. When a sigma factor is associated with the core the holoenzyme is formed, which can initiate transcription.</text>
</comment>
<comment type="similarity">
    <text evidence="1">Belongs to the RNA polymerase beta chain family.</text>
</comment>
<sequence>MGYHNVKYGKKAQRRNYSKTIYDVDLPNLIEIQNQSFDWFLKHGIKELLQDFCPIESYNGDLKIHFDDYFLTPPKYSIEETKIKDISYVAQLFVKTTLENVLTGETKQSNILLTELPLMTSTGTFIINGTERVVVSQIVRSASVYFAGNFDIKLNRTIYSGQVIPSRGAWIEYEEGSKEILYAKLDRSKKIPLSNFIYALGFDSKEAIENVFGKSAILDSVFDKETDMDSDNALVELYSKIRQGEKVPVDTARDFIRTRLFDQKKYDLAKVGRYKFNKKLDVLTRAENTYLACDFVNPENQEIMIAQDELLTKEKIAILKQNRHFLLQEIFDAKHNLENETDEEILAYKKYPQKNELFTKTNIINSRTGEVLVAKDTLVNDDIINHLRHNIHTLDEKVSKFFLGTKDIYQKEADRQGVFNEILEVYTSKDESGKLYNKVKLIGNDQRETKKHITLSDVIASINYYLNLYENVGTVDDIDHLGNRRLRLIGELLKNQFRIGLTRAEKNIKDMISTSKFGEVNGPGDLVNFTFLMSVIKTFFTNSRLSQFMDQINPLAELTQKRRVSALGIGGINRDRAGIEVRDVHNSHYGRLCPIETPEGPSIGLITSLSTYAKVNKYGFIQTPFFKVLQQDGKTTLSRDIDYLTADQEKEEIIASAGFVLDANNSFQDKKIIARSNGETGIFERNQITYADVSPKQIVSVATSSIPFLEHNDASRALMGANMQRQAVPLLIPESPIVGTGVEYRAAKDSGCLIIARESGFVTYVDAQKIIITKKPNQTVSLNGKTLYDTTQEFTYTQAKVLYENNHKEYQAEYTLINFAKSNQDTLVLQKPIVVLGEHINEGDILVSGPSTSQGELALGRNVTVAFMTWEGYNYEDAIIMSEELVKHDVYTSIHIDKYEVQTRELKKGSGQEEITREVPNVGADAIKNLDERGIIIPGSEVKEGDILVGKITPQGNIEPSPSEKLIQIVIGEKAREYKDSSLRVPFGEGGIVQSVHYFSRKNGDVLPAGVNENIRVFIAKKRKINEGDKMAGRHGNKGVISRILPKEDLPYMADGTPIDIMLNPLGVPSRMNIGQILEIHLGMAAKKLGIKVATPVFDGVNDYDLKEIMKEANLEPDGKMVLYDGRTGEPYDSRISVGVMYMVKLSHMVDDKLHARNVGPYTLVTQQPMGGKVQNGGQRFGEMEVWALYAYGAAHTLQEILTVKSDDIVGRNKTYSAIVQGTQLPKPSIPESFRVFIKELQSLGLYVELIKTDTKENEVNKSLIDYKKEGYN</sequence>